<accession>O06457</accession>
<protein>
    <recommendedName>
        <fullName evidence="1">N5-carboxyaminoimidazole ribonucleotide synthase</fullName>
        <shortName evidence="1">N5-CAIR synthase</shortName>
        <ecNumber evidence="1">6.3.4.18</ecNumber>
    </recommendedName>
    <alternativeName>
        <fullName evidence="1">5-(carboxyamino)imidazole ribonucleotide synthetase</fullName>
    </alternativeName>
</protein>
<name>PURK_SACS2</name>
<organism>
    <name type="scientific">Saccharolobus solfataricus (strain ATCC 35092 / DSM 1617 / JCM 11322 / P2)</name>
    <name type="common">Sulfolobus solfataricus</name>
    <dbReference type="NCBI Taxonomy" id="273057"/>
    <lineage>
        <taxon>Archaea</taxon>
        <taxon>Thermoproteota</taxon>
        <taxon>Thermoprotei</taxon>
        <taxon>Sulfolobales</taxon>
        <taxon>Sulfolobaceae</taxon>
        <taxon>Saccharolobus</taxon>
    </lineage>
</organism>
<comment type="function">
    <text evidence="1">Catalyzes the ATP-dependent conversion of 5-aminoimidazole ribonucleotide (AIR) and HCO(3)(-) to N5-carboxyaminoimidazole ribonucleotide (N5-CAIR).</text>
</comment>
<comment type="catalytic activity">
    <reaction evidence="1">
        <text>5-amino-1-(5-phospho-beta-D-ribosyl)imidazole + hydrogencarbonate + ATP = 5-carboxyamino-1-(5-phospho-D-ribosyl)imidazole + ADP + phosphate + 2 H(+)</text>
        <dbReference type="Rhea" id="RHEA:19317"/>
        <dbReference type="ChEBI" id="CHEBI:15378"/>
        <dbReference type="ChEBI" id="CHEBI:17544"/>
        <dbReference type="ChEBI" id="CHEBI:30616"/>
        <dbReference type="ChEBI" id="CHEBI:43474"/>
        <dbReference type="ChEBI" id="CHEBI:58730"/>
        <dbReference type="ChEBI" id="CHEBI:137981"/>
        <dbReference type="ChEBI" id="CHEBI:456216"/>
        <dbReference type="EC" id="6.3.4.18"/>
    </reaction>
</comment>
<comment type="pathway">
    <text evidence="1">Purine metabolism; IMP biosynthesis via de novo pathway; 5-amino-1-(5-phospho-D-ribosyl)imidazole-4-carboxylate from 5-amino-1-(5-phospho-D-ribosyl)imidazole (N5-CAIR route): step 1/2.</text>
</comment>
<comment type="subunit">
    <text evidence="1">Homodimer.</text>
</comment>
<comment type="similarity">
    <text evidence="1">Belongs to the PurK/PurT family.</text>
</comment>
<dbReference type="EC" id="6.3.4.18" evidence="1"/>
<dbReference type="EMBL" id="Y13143">
    <property type="protein sequence ID" value="CAA73603.1"/>
    <property type="molecule type" value="Genomic_DNA"/>
</dbReference>
<dbReference type="EMBL" id="AE006641">
    <property type="protein sequence ID" value="AAK41328.1"/>
    <property type="molecule type" value="Genomic_DNA"/>
</dbReference>
<dbReference type="PIR" id="A90259">
    <property type="entry name" value="A90259"/>
</dbReference>
<dbReference type="RefSeq" id="WP_009989884.1">
    <property type="nucleotide sequence ID" value="NC_002754.1"/>
</dbReference>
<dbReference type="SMR" id="O06457"/>
<dbReference type="FunCoup" id="O06457">
    <property type="interactions" value="93"/>
</dbReference>
<dbReference type="STRING" id="273057.SSO1065"/>
<dbReference type="PaxDb" id="273057-SSO1065"/>
<dbReference type="EnsemblBacteria" id="AAK41328">
    <property type="protein sequence ID" value="AAK41328"/>
    <property type="gene ID" value="SSO1065"/>
</dbReference>
<dbReference type="GeneID" id="44129999"/>
<dbReference type="KEGG" id="sso:SSO1065"/>
<dbReference type="PATRIC" id="fig|273057.12.peg.1062"/>
<dbReference type="eggNOG" id="arCOG01597">
    <property type="taxonomic scope" value="Archaea"/>
</dbReference>
<dbReference type="HOGENOM" id="CLU_011534_0_0_2"/>
<dbReference type="InParanoid" id="O06457"/>
<dbReference type="PhylomeDB" id="O06457"/>
<dbReference type="UniPathway" id="UPA00074">
    <property type="reaction ID" value="UER00942"/>
</dbReference>
<dbReference type="Proteomes" id="UP000001974">
    <property type="component" value="Chromosome"/>
</dbReference>
<dbReference type="GO" id="GO:0034028">
    <property type="term" value="F:5-(carboxyamino)imidazole ribonucleotide synthase activity"/>
    <property type="evidence" value="ECO:0007669"/>
    <property type="project" value="UniProtKB-UniRule"/>
</dbReference>
<dbReference type="GO" id="GO:0005524">
    <property type="term" value="F:ATP binding"/>
    <property type="evidence" value="ECO:0007669"/>
    <property type="project" value="UniProtKB-KW"/>
</dbReference>
<dbReference type="GO" id="GO:0046872">
    <property type="term" value="F:metal ion binding"/>
    <property type="evidence" value="ECO:0007669"/>
    <property type="project" value="InterPro"/>
</dbReference>
<dbReference type="GO" id="GO:0004638">
    <property type="term" value="F:phosphoribosylaminoimidazole carboxylase activity"/>
    <property type="evidence" value="ECO:0007669"/>
    <property type="project" value="InterPro"/>
</dbReference>
<dbReference type="GO" id="GO:0006189">
    <property type="term" value="P:'de novo' IMP biosynthetic process"/>
    <property type="evidence" value="ECO:0007669"/>
    <property type="project" value="UniProtKB-UniRule"/>
</dbReference>
<dbReference type="Gene3D" id="3.40.50.20">
    <property type="match status" value="1"/>
</dbReference>
<dbReference type="Gene3D" id="3.30.1490.20">
    <property type="entry name" value="ATP-grasp fold, A domain"/>
    <property type="match status" value="1"/>
</dbReference>
<dbReference type="Gene3D" id="3.30.470.20">
    <property type="entry name" value="ATP-grasp fold, B domain"/>
    <property type="match status" value="1"/>
</dbReference>
<dbReference type="HAMAP" id="MF_01928">
    <property type="entry name" value="PurK"/>
    <property type="match status" value="1"/>
</dbReference>
<dbReference type="InterPro" id="IPR011761">
    <property type="entry name" value="ATP-grasp"/>
</dbReference>
<dbReference type="InterPro" id="IPR003135">
    <property type="entry name" value="ATP-grasp_carboxylate-amine"/>
</dbReference>
<dbReference type="InterPro" id="IPR013815">
    <property type="entry name" value="ATP_grasp_subdomain_1"/>
</dbReference>
<dbReference type="InterPro" id="IPR016185">
    <property type="entry name" value="PreATP-grasp_dom_sf"/>
</dbReference>
<dbReference type="InterPro" id="IPR005875">
    <property type="entry name" value="PurK"/>
</dbReference>
<dbReference type="InterPro" id="IPR040686">
    <property type="entry name" value="PurK_C"/>
</dbReference>
<dbReference type="InterPro" id="IPR054350">
    <property type="entry name" value="PurT/PurK_preATP-grasp"/>
</dbReference>
<dbReference type="InterPro" id="IPR011054">
    <property type="entry name" value="Rudment_hybrid_motif"/>
</dbReference>
<dbReference type="NCBIfam" id="NF004679">
    <property type="entry name" value="PRK06019.1-5"/>
    <property type="match status" value="1"/>
</dbReference>
<dbReference type="NCBIfam" id="TIGR01161">
    <property type="entry name" value="purK"/>
    <property type="match status" value="1"/>
</dbReference>
<dbReference type="PANTHER" id="PTHR11609:SF5">
    <property type="entry name" value="PHOSPHORIBOSYLAMINOIMIDAZOLE CARBOXYLASE"/>
    <property type="match status" value="1"/>
</dbReference>
<dbReference type="PANTHER" id="PTHR11609">
    <property type="entry name" value="PURINE BIOSYNTHESIS PROTEIN 6/7, PUR6/7"/>
    <property type="match status" value="1"/>
</dbReference>
<dbReference type="Pfam" id="PF02222">
    <property type="entry name" value="ATP-grasp"/>
    <property type="match status" value="1"/>
</dbReference>
<dbReference type="Pfam" id="PF17769">
    <property type="entry name" value="PurK_C"/>
    <property type="match status" value="1"/>
</dbReference>
<dbReference type="Pfam" id="PF22660">
    <property type="entry name" value="RS_preATP-grasp-like"/>
    <property type="match status" value="1"/>
</dbReference>
<dbReference type="SUPFAM" id="SSF56059">
    <property type="entry name" value="Glutathione synthetase ATP-binding domain-like"/>
    <property type="match status" value="1"/>
</dbReference>
<dbReference type="SUPFAM" id="SSF52440">
    <property type="entry name" value="PreATP-grasp domain"/>
    <property type="match status" value="1"/>
</dbReference>
<dbReference type="SUPFAM" id="SSF51246">
    <property type="entry name" value="Rudiment single hybrid motif"/>
    <property type="match status" value="1"/>
</dbReference>
<dbReference type="PROSITE" id="PS50975">
    <property type="entry name" value="ATP_GRASP"/>
    <property type="match status" value="1"/>
</dbReference>
<keyword id="KW-0067">ATP-binding</keyword>
<keyword id="KW-0436">Ligase</keyword>
<keyword id="KW-0547">Nucleotide-binding</keyword>
<keyword id="KW-0658">Purine biosynthesis</keyword>
<keyword id="KW-1185">Reference proteome</keyword>
<reference key="1">
    <citation type="journal article" date="1997" name="FEMS Microbiol. Lett.">
        <title>Identification and sequence analysis of Sulfolobus solfataricus purE and purK genes.</title>
        <authorList>
            <person name="Soerensen I.S."/>
            <person name="Dandanell G."/>
        </authorList>
    </citation>
    <scope>NUCLEOTIDE SEQUENCE [GENOMIC DNA]</scope>
    <source>
        <strain>ATCC 35092 / DSM 1617 / JCM 11322 / P2</strain>
    </source>
</reference>
<reference key="2">
    <citation type="journal article" date="2001" name="Proc. Natl. Acad. Sci. U.S.A.">
        <title>The complete genome of the crenarchaeon Sulfolobus solfataricus P2.</title>
        <authorList>
            <person name="She Q."/>
            <person name="Singh R.K."/>
            <person name="Confalonieri F."/>
            <person name="Zivanovic Y."/>
            <person name="Allard G."/>
            <person name="Awayez M.J."/>
            <person name="Chan-Weiher C.C.-Y."/>
            <person name="Clausen I.G."/>
            <person name="Curtis B.A."/>
            <person name="De Moors A."/>
            <person name="Erauso G."/>
            <person name="Fletcher C."/>
            <person name="Gordon P.M.K."/>
            <person name="Heikamp-de Jong I."/>
            <person name="Jeffries A.C."/>
            <person name="Kozera C.J."/>
            <person name="Medina N."/>
            <person name="Peng X."/>
            <person name="Thi-Ngoc H.P."/>
            <person name="Redder P."/>
            <person name="Schenk M.E."/>
            <person name="Theriault C."/>
            <person name="Tolstrup N."/>
            <person name="Charlebois R.L."/>
            <person name="Doolittle W.F."/>
            <person name="Duguet M."/>
            <person name="Gaasterland T."/>
            <person name="Garrett R.A."/>
            <person name="Ragan M.A."/>
            <person name="Sensen C.W."/>
            <person name="Van der Oost J."/>
        </authorList>
    </citation>
    <scope>NUCLEOTIDE SEQUENCE [LARGE SCALE GENOMIC DNA]</scope>
    <source>
        <strain>ATCC 35092 / DSM 1617 / JCM 11322 / P2</strain>
    </source>
</reference>
<evidence type="ECO:0000255" key="1">
    <source>
        <dbReference type="HAMAP-Rule" id="MF_01928"/>
    </source>
</evidence>
<gene>
    <name evidence="1" type="primary">purK</name>
    <name type="ordered locus">SSO1065</name>
</gene>
<sequence length="365" mass="42360">MFSVLDWKPKIGILGGGQLGWMIVLEGRKYPFTFYVLENDKNAPACRIADRCFSPQDYKEFVDSSDVITFEFEHVYEKALEYAEYSGKLLPRLNSVELKRERYKEKLFYRQHNLPTPRFYVAEDGEEALKILREEFNNVGVIKESKGGYDGKGQYFIFNDVEKYQFLREKKEKMVVEEYVKFDFEASIIIARDKRGVFISYPPTYNYNEKGILVYNYGPYNNQNIVEIARRLSEELDYVGIMGVEVFVVNGKVLINEFAPRVHNTGHYTLDGALISQFEQHLRAIIGMELGPSTILSPSGMVNILGTDKIPVEVLKYGKVYWYSKSEVRKRRKMGHVNVVGNNLEEVKQKIDKIMQLIYTNGLDL</sequence>
<feature type="chain" id="PRO_0000075020" description="N5-carboxyaminoimidazole ribonucleotide synthase">
    <location>
        <begin position="1"/>
        <end position="365"/>
    </location>
</feature>
<feature type="domain" description="ATP-grasp" evidence="1">
    <location>
        <begin position="106"/>
        <end position="286"/>
    </location>
</feature>
<feature type="binding site" evidence="1">
    <location>
        <position position="102"/>
    </location>
    <ligand>
        <name>ATP</name>
        <dbReference type="ChEBI" id="CHEBI:30616"/>
    </ligand>
</feature>
<feature type="binding site" evidence="1">
    <location>
        <position position="143"/>
    </location>
    <ligand>
        <name>ATP</name>
        <dbReference type="ChEBI" id="CHEBI:30616"/>
    </ligand>
</feature>
<feature type="binding site" evidence="1">
    <location>
        <begin position="148"/>
        <end position="154"/>
    </location>
    <ligand>
        <name>ATP</name>
        <dbReference type="ChEBI" id="CHEBI:30616"/>
    </ligand>
</feature>
<feature type="binding site" evidence="1">
    <location>
        <begin position="177"/>
        <end position="180"/>
    </location>
    <ligand>
        <name>ATP</name>
        <dbReference type="ChEBI" id="CHEBI:30616"/>
    </ligand>
</feature>
<feature type="binding site" evidence="1">
    <location>
        <position position="185"/>
    </location>
    <ligand>
        <name>ATP</name>
        <dbReference type="ChEBI" id="CHEBI:30616"/>
    </ligand>
</feature>
<feature type="binding site" evidence="1">
    <location>
        <begin position="256"/>
        <end position="257"/>
    </location>
    <ligand>
        <name>ATP</name>
        <dbReference type="ChEBI" id="CHEBI:30616"/>
    </ligand>
</feature>
<proteinExistence type="inferred from homology"/>